<gene>
    <name evidence="1" type="primary">dabA2</name>
    <name type="ordered locus">BRADO6223</name>
</gene>
<name>DABA2_BRASO</name>
<comment type="function">
    <text evidence="1">Part of an energy-coupled inorganic carbon pump.</text>
</comment>
<comment type="cofactor">
    <cofactor evidence="1">
        <name>Zn(2+)</name>
        <dbReference type="ChEBI" id="CHEBI:29105"/>
    </cofactor>
</comment>
<comment type="subunit">
    <text evidence="1">Forms a complex with DabB.</text>
</comment>
<comment type="subcellular location">
    <subcellularLocation>
        <location evidence="1">Cell inner membrane</location>
        <topology evidence="1">Peripheral membrane protein</topology>
    </subcellularLocation>
</comment>
<comment type="similarity">
    <text evidence="1">Belongs to the inorganic carbon transporter (TC 9.A.2) DabA family.</text>
</comment>
<feature type="chain" id="PRO_0000387254" description="Probable inorganic carbon transporter subunit DabA 2">
    <location>
        <begin position="1"/>
        <end position="840"/>
    </location>
</feature>
<feature type="binding site" evidence="1">
    <location>
        <position position="356"/>
    </location>
    <ligand>
        <name>Zn(2+)</name>
        <dbReference type="ChEBI" id="CHEBI:29105"/>
    </ligand>
</feature>
<feature type="binding site" evidence="1">
    <location>
        <position position="358"/>
    </location>
    <ligand>
        <name>Zn(2+)</name>
        <dbReference type="ChEBI" id="CHEBI:29105"/>
    </ligand>
</feature>
<feature type="binding site" evidence="1">
    <location>
        <position position="540"/>
    </location>
    <ligand>
        <name>Zn(2+)</name>
        <dbReference type="ChEBI" id="CHEBI:29105"/>
    </ligand>
</feature>
<feature type="binding site" evidence="1">
    <location>
        <position position="555"/>
    </location>
    <ligand>
        <name>Zn(2+)</name>
        <dbReference type="ChEBI" id="CHEBI:29105"/>
    </ligand>
</feature>
<keyword id="KW-0997">Cell inner membrane</keyword>
<keyword id="KW-1003">Cell membrane</keyword>
<keyword id="KW-0472">Membrane</keyword>
<keyword id="KW-0479">Metal-binding</keyword>
<keyword id="KW-1185">Reference proteome</keyword>
<keyword id="KW-0813">Transport</keyword>
<keyword id="KW-0862">Zinc</keyword>
<evidence type="ECO:0000255" key="1">
    <source>
        <dbReference type="HAMAP-Rule" id="MF_01871"/>
    </source>
</evidence>
<sequence length="840" mass="90553">MTQAALAMSMTDPIDTTADAGLMARIDSACQRIAPLWPLKHFVAVNPFLGFTGQSFAATAATFERVVRTRMLMPRAFYRQALDDGRIDDAALAQALGAHPSTGLELNELKQKARAEAGTSSPPAVVATVAEVLDRLAEGDRYVSLVAFMIDEISAFCATYFDEGQASWPSPVRKLKPYAAWRTIAAYDRNPEVMGLTGFRKAIAELPADPVQAIGVIVDRLGIPERAVEDYLVRALFDLGGWSAYARYIGWSAGLDGQRDDTLLELLAIRLAWGYALYQARTDDAFKAAWAQAMAEAAKLPADQRLEETPELAIDLVLHEAYEIALRSKLVARLAGHGAQAVTRLPARPPVQAAFCIDVRSEIFRRALETAYPDAETIGFAGFFGFPIEYVPIGHSKGGAQCPVLLKPAFIVCEAVKDADDVEQSEVLGLRLLRRRAAKALKSFKVSAVSSFSFVETAGLGFAAKIATDSAGVTRPVPSPVVDGLDPEIAARVQPRLTPGELAGRATGFTDPQRVAMAEAVLKAMSLTGPFARLVLLAGHGSTTVNNPHASGLDCGACGGHTGEANARVAAAVLNDWQVREGLRAKGIDIPADCWFIGALHDTTTDDVTLFDEDDVPATLAQDLARLKARLTEAARLARLERSALLGISNKAAVDEAVIARSRDWSQVRPEWGLAGNTAFIAAPRSFTRGLNLGGRAFLHSYEAARDDGHRTLELIMTAPMVVASWINLQYYGSTVNNAAFGSGNKVLHNIVGQLGVLEGNAGDLRVGLPWQSVHDGSRLIHEPVRLNVFIAAPEAAMDEIMQRHQGVRDLVVNGWVMLHSLSDQGTIRRCVRPGEWRSA</sequence>
<accession>A4Z142</accession>
<dbReference type="EMBL" id="CU234118">
    <property type="protein sequence ID" value="CAL79868.1"/>
    <property type="molecule type" value="Genomic_DNA"/>
</dbReference>
<dbReference type="RefSeq" id="WP_012029754.1">
    <property type="nucleotide sequence ID" value="NC_009445.1"/>
</dbReference>
<dbReference type="STRING" id="114615.BRADO6223"/>
<dbReference type="KEGG" id="bra:BRADO6223"/>
<dbReference type="eggNOG" id="COG3002">
    <property type="taxonomic scope" value="Bacteria"/>
</dbReference>
<dbReference type="HOGENOM" id="CLU_009885_0_0_5"/>
<dbReference type="OrthoDB" id="9805101at2"/>
<dbReference type="Proteomes" id="UP000001994">
    <property type="component" value="Chromosome"/>
</dbReference>
<dbReference type="GO" id="GO:0005886">
    <property type="term" value="C:plasma membrane"/>
    <property type="evidence" value="ECO:0007669"/>
    <property type="project" value="UniProtKB-SubCell"/>
</dbReference>
<dbReference type="GO" id="GO:0008270">
    <property type="term" value="F:zinc ion binding"/>
    <property type="evidence" value="ECO:0007669"/>
    <property type="project" value="UniProtKB-UniRule"/>
</dbReference>
<dbReference type="HAMAP" id="MF_01871">
    <property type="entry name" value="DabA"/>
    <property type="match status" value="1"/>
</dbReference>
<dbReference type="InterPro" id="IPR018752">
    <property type="entry name" value="DabA"/>
</dbReference>
<dbReference type="PANTHER" id="PTHR38344:SF1">
    <property type="entry name" value="INORGANIC CARBON TRANSPORTER SUBUNIT DABA-RELATED"/>
    <property type="match status" value="1"/>
</dbReference>
<dbReference type="PANTHER" id="PTHR38344">
    <property type="entry name" value="UPF0753 PROTEIN AQ_863"/>
    <property type="match status" value="1"/>
</dbReference>
<dbReference type="Pfam" id="PF10070">
    <property type="entry name" value="DabA"/>
    <property type="match status" value="1"/>
</dbReference>
<proteinExistence type="inferred from homology"/>
<reference key="1">
    <citation type="journal article" date="2007" name="Science">
        <title>Legumes symbioses: absence of nod genes in photosynthetic bradyrhizobia.</title>
        <authorList>
            <person name="Giraud E."/>
            <person name="Moulin L."/>
            <person name="Vallenet D."/>
            <person name="Barbe V."/>
            <person name="Cytryn E."/>
            <person name="Avarre J.-C."/>
            <person name="Jaubert M."/>
            <person name="Simon D."/>
            <person name="Cartieaux F."/>
            <person name="Prin Y."/>
            <person name="Bena G."/>
            <person name="Hannibal L."/>
            <person name="Fardoux J."/>
            <person name="Kojadinovic M."/>
            <person name="Vuillet L."/>
            <person name="Lajus A."/>
            <person name="Cruveiller S."/>
            <person name="Rouy Z."/>
            <person name="Mangenot S."/>
            <person name="Segurens B."/>
            <person name="Dossat C."/>
            <person name="Franck W.L."/>
            <person name="Chang W.-S."/>
            <person name="Saunders E."/>
            <person name="Bruce D."/>
            <person name="Richardson P."/>
            <person name="Normand P."/>
            <person name="Dreyfus B."/>
            <person name="Pignol D."/>
            <person name="Stacey G."/>
            <person name="Emerich D."/>
            <person name="Vermeglio A."/>
            <person name="Medigue C."/>
            <person name="Sadowsky M."/>
        </authorList>
    </citation>
    <scope>NUCLEOTIDE SEQUENCE [LARGE SCALE GENOMIC DNA]</scope>
    <source>
        <strain>ORS 278</strain>
    </source>
</reference>
<protein>
    <recommendedName>
        <fullName evidence="1">Probable inorganic carbon transporter subunit DabA 2</fullName>
    </recommendedName>
</protein>
<organism>
    <name type="scientific">Bradyrhizobium sp. (strain ORS 278)</name>
    <dbReference type="NCBI Taxonomy" id="114615"/>
    <lineage>
        <taxon>Bacteria</taxon>
        <taxon>Pseudomonadati</taxon>
        <taxon>Pseudomonadota</taxon>
        <taxon>Alphaproteobacteria</taxon>
        <taxon>Hyphomicrobiales</taxon>
        <taxon>Nitrobacteraceae</taxon>
        <taxon>Bradyrhizobium</taxon>
    </lineage>
</organism>